<comment type="function">
    <text evidence="2">Factor IX is a vitamin K-dependent plasma protein that participates in the intrinsic pathway of blood coagulation by converting factor X to its active form in the presence of Ca(2+) ions, phospholipids, and factor VIIIa.</text>
</comment>
<comment type="catalytic activity">
    <reaction evidence="2">
        <text>Selective cleavage of Arg-|-Ile bond in factor X to form factor Xa.</text>
        <dbReference type="EC" id="3.4.21.22"/>
    </reaction>
</comment>
<comment type="subunit">
    <text evidence="2">Heterodimer of a light chain and a heavy chain; disulfide-linked.</text>
</comment>
<comment type="subcellular location">
    <subcellularLocation>
        <location evidence="2">Secreted</location>
    </subcellularLocation>
</comment>
<comment type="domain">
    <text evidence="3">Calcium binds to the gamma-carboxyglutamic acid (Gla) residues in the Gla domain. Calcium can also bind, with stronger affinity, to another site beyond the Gla domain. Under physiological ion concentrations, Ca(2+) is displaced by Mg(2+) from some of the gammaglutamate residues in the N-terminal Gla domain. This leads to a subtle conformation change that may affect the interaction with its binding protein.</text>
</comment>
<comment type="PTM">
    <text evidence="2">Activated by factor XIa, which excises the activation peptide. The propeptide can also be removed by snake venom protease (By similarity). Activated by coagulation factor VIIa-tissue factor (F7-F3) complex in calcium-dependent manner (By similarity).</text>
</comment>
<comment type="PTM">
    <text evidence="2">The iron and 2-oxoglutarate dependent 3-hydroxylation of aspartate and asparagine is (R) stereospecific within EGF domains.</text>
</comment>
<comment type="similarity">
    <text evidence="6">Belongs to the peptidase S1 family.</text>
</comment>
<organism>
    <name type="scientific">Gallus gallus</name>
    <name type="common">Chicken</name>
    <dbReference type="NCBI Taxonomy" id="9031"/>
    <lineage>
        <taxon>Eukaryota</taxon>
        <taxon>Metazoa</taxon>
        <taxon>Chordata</taxon>
        <taxon>Craniata</taxon>
        <taxon>Vertebrata</taxon>
        <taxon>Euteleostomi</taxon>
        <taxon>Archelosauria</taxon>
        <taxon>Archosauria</taxon>
        <taxon>Dinosauria</taxon>
        <taxon>Saurischia</taxon>
        <taxon>Theropoda</taxon>
        <taxon>Coelurosauria</taxon>
        <taxon>Aves</taxon>
        <taxon>Neognathae</taxon>
        <taxon>Galloanserae</taxon>
        <taxon>Galliformes</taxon>
        <taxon>Phasianidae</taxon>
        <taxon>Phasianinae</taxon>
        <taxon>Gallus</taxon>
    </lineage>
</organism>
<feature type="signal peptide" evidence="4">
    <location>
        <begin position="1"/>
        <end position="19"/>
    </location>
</feature>
<feature type="propeptide" id="PRO_0000027774" evidence="2">
    <location>
        <begin position="20"/>
        <end position="39"/>
    </location>
</feature>
<feature type="chain" id="PRO_0000027775" description="Coagulation factor IX">
    <location>
        <begin position="40"/>
        <end position="471"/>
    </location>
</feature>
<feature type="chain" id="PRO_0000027776" description="Coagulation factor IXa light chain">
    <location>
        <begin position="40"/>
        <end position="185"/>
    </location>
</feature>
<feature type="propeptide" id="PRO_0000027777" description="Activation peptide" evidence="1">
    <location>
        <begin position="186"/>
        <end position="235"/>
    </location>
</feature>
<feature type="chain" id="PRO_0000027778" description="Coagulation factor IXa heavy chain">
    <location>
        <begin position="236"/>
        <end position="471"/>
    </location>
</feature>
<feature type="domain" description="Gla" evidence="7">
    <location>
        <begin position="40"/>
        <end position="85"/>
    </location>
</feature>
<feature type="domain" description="EGF-like 1; calcium-binding" evidence="5">
    <location>
        <begin position="86"/>
        <end position="122"/>
    </location>
</feature>
<feature type="domain" description="EGF-like 2" evidence="5">
    <location>
        <begin position="123"/>
        <end position="164"/>
    </location>
</feature>
<feature type="domain" description="Peptidase S1" evidence="6">
    <location>
        <begin position="236"/>
        <end position="469"/>
    </location>
</feature>
<feature type="active site" description="Charge relay system" evidence="2">
    <location>
        <position position="277"/>
    </location>
</feature>
<feature type="active site" description="Charge relay system" evidence="2">
    <location>
        <position position="325"/>
    </location>
</feature>
<feature type="active site" description="Charge relay system" evidence="2">
    <location>
        <position position="421"/>
    </location>
</feature>
<feature type="binding site" evidence="2">
    <location>
        <position position="41"/>
    </location>
    <ligand>
        <name>Ca(2+)</name>
        <dbReference type="ChEBI" id="CHEBI:29108"/>
        <label>2</label>
    </ligand>
</feature>
<feature type="binding site" description="via 4-carboxyglutamate" evidence="2">
    <location>
        <position position="46"/>
    </location>
    <ligand>
        <name>Ca(2+)</name>
        <dbReference type="ChEBI" id="CHEBI:29108"/>
        <label>1</label>
    </ligand>
</feature>
<feature type="binding site" description="via 4-carboxyglutamate" evidence="2">
    <location>
        <position position="46"/>
    </location>
    <ligand>
        <name>Ca(2+)</name>
        <dbReference type="ChEBI" id="CHEBI:29108"/>
        <label>2</label>
    </ligand>
</feature>
<feature type="binding site" description="via 4-carboxyglutamate" evidence="2">
    <location>
        <position position="47"/>
    </location>
    <ligand>
        <name>Ca(2+)</name>
        <dbReference type="ChEBI" id="CHEBI:29108"/>
        <label>2</label>
    </ligand>
</feature>
<feature type="binding site" description="via 4-carboxyglutamate" evidence="2">
    <location>
        <position position="47"/>
    </location>
    <ligand>
        <name>Ca(2+)</name>
        <dbReference type="ChEBI" id="CHEBI:29108"/>
        <label>3</label>
    </ligand>
</feature>
<feature type="binding site" description="via 4-carboxyglutamate" evidence="2">
    <location>
        <position position="54"/>
    </location>
    <ligand>
        <name>Ca(2+)</name>
        <dbReference type="ChEBI" id="CHEBI:29108"/>
        <label>4</label>
    </ligand>
</feature>
<feature type="binding site" description="via 4-carboxyglutamate" evidence="2">
    <location>
        <position position="54"/>
    </location>
    <ligand>
        <name>Mg(2+)</name>
        <dbReference type="ChEBI" id="CHEBI:18420"/>
        <label>1</label>
    </ligand>
</feature>
<feature type="binding site" description="via 4-carboxyglutamate" evidence="2">
    <location>
        <position position="56"/>
    </location>
    <ligand>
        <name>Ca(2+)</name>
        <dbReference type="ChEBI" id="CHEBI:29108"/>
        <label>1</label>
    </ligand>
</feature>
<feature type="binding site" description="via 4-carboxyglutamate" evidence="2">
    <location>
        <position position="56"/>
    </location>
    <ligand>
        <name>Ca(2+)</name>
        <dbReference type="ChEBI" id="CHEBI:29108"/>
        <label>2</label>
    </ligand>
</feature>
<feature type="binding site" description="via 4-carboxyglutamate" evidence="2">
    <location>
        <position position="56"/>
    </location>
    <ligand>
        <name>Ca(2+)</name>
        <dbReference type="ChEBI" id="CHEBI:29108"/>
        <label>3</label>
    </ligand>
</feature>
<feature type="binding site" description="via 4-carboxyglutamate" evidence="2">
    <location>
        <position position="59"/>
    </location>
    <ligand>
        <name>Ca(2+)</name>
        <dbReference type="ChEBI" id="CHEBI:29108"/>
        <label>4</label>
    </ligand>
</feature>
<feature type="binding site" description="via 4-carboxyglutamate" evidence="2">
    <location>
        <position position="59"/>
    </location>
    <ligand>
        <name>Mg(2+)</name>
        <dbReference type="ChEBI" id="CHEBI:18420"/>
        <label>1</label>
    </ligand>
</feature>
<feature type="binding site" description="via 4-carboxyglutamate" evidence="2">
    <location>
        <position position="60"/>
    </location>
    <ligand>
        <name>Ca(2+)</name>
        <dbReference type="ChEBI" id="CHEBI:29108"/>
        <label>1</label>
    </ligand>
</feature>
<feature type="binding site" description="via 4-carboxyglutamate" evidence="2">
    <location>
        <position position="65"/>
    </location>
    <ligand>
        <name>Ca(2+)</name>
        <dbReference type="ChEBI" id="CHEBI:29108"/>
        <label>5</label>
    </ligand>
</feature>
<feature type="binding site" description="via 4-carboxyglutamate" evidence="2">
    <location>
        <position position="65"/>
    </location>
    <ligand>
        <name>Mg(2+)</name>
        <dbReference type="ChEBI" id="CHEBI:18420"/>
        <label>2</label>
    </ligand>
</feature>
<feature type="binding site" description="via 4-carboxyglutamate" evidence="2">
    <location>
        <position position="66"/>
    </location>
    <ligand>
        <name>Ca(2+)</name>
        <dbReference type="ChEBI" id="CHEBI:29108"/>
        <label>2</label>
    </ligand>
</feature>
<feature type="binding site" description="via 4-carboxyglutamate" evidence="2">
    <location>
        <position position="66"/>
    </location>
    <ligand>
        <name>Ca(2+)</name>
        <dbReference type="ChEBI" id="CHEBI:29108"/>
        <label>3</label>
    </ligand>
</feature>
<feature type="binding site" description="via 4-carboxyglutamate" evidence="2">
    <location>
        <position position="69"/>
    </location>
    <ligand>
        <name>Ca(2+)</name>
        <dbReference type="ChEBI" id="CHEBI:29108"/>
        <label>3</label>
    </ligand>
</feature>
<feature type="binding site" description="via 4-carboxyglutamate" evidence="2">
    <location>
        <position position="69"/>
    </location>
    <ligand>
        <name>Ca(2+)</name>
        <dbReference type="ChEBI" id="CHEBI:29108"/>
        <label>5</label>
    </ligand>
</feature>
<feature type="binding site" description="via 4-carboxyglutamate" evidence="2">
    <location>
        <position position="69"/>
    </location>
    <ligand>
        <name>Mg(2+)</name>
        <dbReference type="ChEBI" id="CHEBI:18420"/>
        <label>2</label>
    </ligand>
</feature>
<feature type="binding site" description="via 4-carboxyglutamate" evidence="2">
    <location>
        <position position="75"/>
    </location>
    <ligand>
        <name>Ca(2+)</name>
        <dbReference type="ChEBI" id="CHEBI:29108"/>
        <label>6</label>
    </ligand>
</feature>
<feature type="binding site" description="via 4-carboxyglutamate" evidence="2">
    <location>
        <position position="75"/>
    </location>
    <ligand>
        <name>Mg(2+)</name>
        <dbReference type="ChEBI" id="CHEBI:18420"/>
        <label>3</label>
    </ligand>
</feature>
<feature type="binding site" description="via 4-carboxyglutamate" evidence="2">
    <location>
        <position position="79"/>
    </location>
    <ligand>
        <name>Ca(2+)</name>
        <dbReference type="ChEBI" id="CHEBI:29108"/>
        <label>6</label>
    </ligand>
</feature>
<feature type="binding site" description="via 4-carboxyglutamate" evidence="2">
    <location>
        <position position="79"/>
    </location>
    <ligand>
        <name>Mg(2+)</name>
        <dbReference type="ChEBI" id="CHEBI:18420"/>
        <label>3</label>
    </ligand>
</feature>
<feature type="binding site" evidence="2">
    <location>
        <position position="86"/>
    </location>
    <ligand>
        <name>Ca(2+)</name>
        <dbReference type="ChEBI" id="CHEBI:29108"/>
        <label>7</label>
    </ligand>
</feature>
<feature type="binding site" evidence="2">
    <location>
        <position position="87"/>
    </location>
    <ligand>
        <name>Ca(2+)</name>
        <dbReference type="ChEBI" id="CHEBI:29108"/>
        <label>7</label>
    </ligand>
</feature>
<feature type="binding site" evidence="2">
    <location>
        <position position="89"/>
    </location>
    <ligand>
        <name>Ca(2+)</name>
        <dbReference type="ChEBI" id="CHEBI:29108"/>
        <label>7</label>
    </ligand>
</feature>
<feature type="binding site" evidence="2">
    <location>
        <position position="103"/>
    </location>
    <ligand>
        <name>Ca(2+)</name>
        <dbReference type="ChEBI" id="CHEBI:29108"/>
        <label>7</label>
    </ligand>
</feature>
<feature type="binding site" evidence="2">
    <location>
        <position position="291"/>
    </location>
    <ligand>
        <name>Ca(2+)</name>
        <dbReference type="ChEBI" id="CHEBI:29108"/>
        <label>8</label>
    </ligand>
</feature>
<feature type="binding site" evidence="2">
    <location>
        <position position="293"/>
    </location>
    <ligand>
        <name>Ca(2+)</name>
        <dbReference type="ChEBI" id="CHEBI:29108"/>
        <label>8</label>
    </ligand>
</feature>
<feature type="binding site" evidence="2">
    <location>
        <position position="296"/>
    </location>
    <ligand>
        <name>Ca(2+)</name>
        <dbReference type="ChEBI" id="CHEBI:29108"/>
        <label>8</label>
    </ligand>
</feature>
<feature type="binding site" evidence="2">
    <location>
        <position position="301"/>
    </location>
    <ligand>
        <name>Ca(2+)</name>
        <dbReference type="ChEBI" id="CHEBI:29108"/>
        <label>8</label>
    </ligand>
</feature>
<feature type="site" description="Cleavage; by factor XIa" evidence="1">
    <location>
        <begin position="185"/>
        <end position="186"/>
    </location>
</feature>
<feature type="site" description="Cleavage; by factor XIa" evidence="1">
    <location>
        <begin position="235"/>
        <end position="236"/>
    </location>
</feature>
<feature type="modified residue" description="4-carboxyglutamate" evidence="7">
    <location>
        <position position="46"/>
    </location>
</feature>
<feature type="modified residue" description="4-carboxyglutamate" evidence="7">
    <location>
        <position position="47"/>
    </location>
</feature>
<feature type="modified residue" description="4-carboxyglutamate" evidence="7">
    <location>
        <position position="54"/>
    </location>
</feature>
<feature type="modified residue" description="4-carboxyglutamate" evidence="7">
    <location>
        <position position="56"/>
    </location>
</feature>
<feature type="modified residue" description="4-carboxyglutamate" evidence="7">
    <location>
        <position position="59"/>
    </location>
</feature>
<feature type="modified residue" description="4-carboxyglutamate" evidence="7">
    <location>
        <position position="60"/>
    </location>
</feature>
<feature type="modified residue" description="4-carboxyglutamate" evidence="7">
    <location>
        <position position="65"/>
    </location>
</feature>
<feature type="modified residue" description="4-carboxyglutamate" evidence="7">
    <location>
        <position position="66"/>
    </location>
</feature>
<feature type="modified residue" description="4-carboxyglutamate" evidence="7">
    <location>
        <position position="69"/>
    </location>
</feature>
<feature type="modified residue" description="4-carboxyglutamate" evidence="7">
    <location>
        <position position="72"/>
    </location>
</feature>
<feature type="modified residue" description="4-carboxyglutamate" evidence="7">
    <location>
        <position position="75"/>
    </location>
</feature>
<feature type="modified residue" description="4-carboxyglutamate" evidence="7">
    <location>
        <position position="79"/>
    </location>
</feature>
<feature type="modified residue" description="(3R)-3-hydroxyaspartate" evidence="2">
    <location>
        <position position="103"/>
    </location>
</feature>
<feature type="modified residue" description="Phosphoserine" evidence="2">
    <location>
        <position position="107"/>
    </location>
</feature>
<feature type="glycosylation site" description="O-linked (Glc...) serine" evidence="2">
    <location>
        <position position="92"/>
    </location>
</feature>
<feature type="disulfide bond" evidence="2">
    <location>
        <begin position="57"/>
        <end position="62"/>
    </location>
</feature>
<feature type="disulfide bond" evidence="2">
    <location>
        <begin position="90"/>
        <end position="101"/>
    </location>
</feature>
<feature type="disulfide bond" evidence="2">
    <location>
        <begin position="95"/>
        <end position="110"/>
    </location>
</feature>
<feature type="disulfide bond" evidence="2">
    <location>
        <begin position="112"/>
        <end position="121"/>
    </location>
</feature>
<feature type="disulfide bond" evidence="2">
    <location>
        <begin position="127"/>
        <end position="138"/>
    </location>
</feature>
<feature type="disulfide bond" evidence="2">
    <location>
        <begin position="134"/>
        <end position="148"/>
    </location>
</feature>
<feature type="disulfide bond" evidence="2">
    <location>
        <begin position="150"/>
        <end position="163"/>
    </location>
</feature>
<feature type="disulfide bond" description="Interchain (between light and heavy chains)" evidence="2">
    <location>
        <begin position="171"/>
        <end position="345"/>
    </location>
</feature>
<feature type="disulfide bond" evidence="2">
    <location>
        <begin position="262"/>
        <end position="278"/>
    </location>
</feature>
<feature type="disulfide bond" evidence="2">
    <location>
        <begin position="392"/>
        <end position="406"/>
    </location>
</feature>
<feature type="disulfide bond" evidence="2">
    <location>
        <begin position="417"/>
        <end position="445"/>
    </location>
</feature>
<sequence length="471" mass="51804">MAKIPLILSFCLLEAFLGAESTVFIENKEASTVLSRTRRGNSNRLEELIPGNLERECIEEKCSFEEAREVFENTEKTMEFWKIYIDGDQCNSNPCKNGAVCKDGVSSYECMCPPGYGGRNCEIDSTCATKNGGCEHFCRHDTPQKAVCSCASGYKLHEDGKSCKPAVPYPCGRITAPEMRGKVTRTENTIERWNITAHDEGDAHDEALDITEPPPPPTTSAAPAKIVPITKNDTRVVGGYDSVKGQLPWQVHLVDSRGLGFCGGSIINEKWVVTAAHCLEPGDNVTAVAGEYNTKEDDHTEQRRQVVKILPYPTYNRTRNKHHNDIALLELDQPLTFNSYVTPICIGSRDFTNNLLSNGPGTVSGWGSMLYRGRSAIVLQVLTVPFVDRVTCLKSTSTTILHSMFCAGYTAGGKDTCGGDSGGPYTNSIGETWFLTGVTSWGEECAKPGKYGIYTKVAKYVKWIRETTRLT</sequence>
<keyword id="KW-0094">Blood coagulation</keyword>
<keyword id="KW-0106">Calcium</keyword>
<keyword id="KW-0165">Cleavage on pair of basic residues</keyword>
<keyword id="KW-1015">Disulfide bond</keyword>
<keyword id="KW-0245">EGF-like domain</keyword>
<keyword id="KW-0301">Gamma-carboxyglutamic acid</keyword>
<keyword id="KW-0325">Glycoprotein</keyword>
<keyword id="KW-0356">Hemostasis</keyword>
<keyword id="KW-0378">Hydrolase</keyword>
<keyword id="KW-0379">Hydroxylation</keyword>
<keyword id="KW-0460">Magnesium</keyword>
<keyword id="KW-0479">Metal-binding</keyword>
<keyword id="KW-0597">Phosphoprotein</keyword>
<keyword id="KW-0645">Protease</keyword>
<keyword id="KW-1185">Reference proteome</keyword>
<keyword id="KW-0677">Repeat</keyword>
<keyword id="KW-0964">Secreted</keyword>
<keyword id="KW-0720">Serine protease</keyword>
<keyword id="KW-0732">Signal</keyword>
<keyword id="KW-0865">Zymogen</keyword>
<reference key="1">
    <citation type="journal article" date="2003" name="Thromb. Haemost.">
        <title>Molecular evolution of the vertebrate blood coagulation network.</title>
        <authorList>
            <person name="Davidson C.J."/>
            <person name="Hirt R.P."/>
            <person name="Lal K."/>
            <person name="Snell P."/>
            <person name="Elgar G."/>
            <person name="Tuddenham E.G."/>
            <person name="McVey J.H."/>
        </authorList>
    </citation>
    <scope>NUCLEOTIDE SEQUENCE [MRNA]</scope>
</reference>
<protein>
    <recommendedName>
        <fullName>Coagulation factor IX</fullName>
        <ecNumber evidence="2">3.4.21.22</ecNumber>
    </recommendedName>
    <alternativeName>
        <fullName>Christmas factor</fullName>
    </alternativeName>
    <component>
        <recommendedName>
            <fullName>Coagulation factor IXa light chain</fullName>
        </recommendedName>
    </component>
    <component>
        <recommendedName>
            <fullName>Coagulation factor IXa heavy chain</fullName>
        </recommendedName>
    </component>
</protein>
<dbReference type="EC" id="3.4.21.22" evidence="2"/>
<dbReference type="EMBL" id="AF465269">
    <property type="protein sequence ID" value="AAO33364.1"/>
    <property type="molecule type" value="mRNA"/>
</dbReference>
<dbReference type="RefSeq" id="NP_989674.1">
    <property type="nucleotide sequence ID" value="NM_204343.1"/>
</dbReference>
<dbReference type="SMR" id="Q804X6"/>
<dbReference type="FunCoup" id="Q804X6">
    <property type="interactions" value="6"/>
</dbReference>
<dbReference type="STRING" id="9031.ENSGALP00000010511"/>
<dbReference type="MEROPS" id="S01.214"/>
<dbReference type="GlyCosmos" id="Q804X6">
    <property type="glycosylation" value="1 site, No reported glycans"/>
</dbReference>
<dbReference type="GlyGen" id="Q804X6">
    <property type="glycosylation" value="2 sites"/>
</dbReference>
<dbReference type="PaxDb" id="9031-ENSGALP00000010511"/>
<dbReference type="GeneID" id="374258"/>
<dbReference type="KEGG" id="gga:374258"/>
<dbReference type="CTD" id="2158"/>
<dbReference type="VEuPathDB" id="HostDB:geneid_374258"/>
<dbReference type="eggNOG" id="ENOG502QUEV">
    <property type="taxonomic scope" value="Eukaryota"/>
</dbReference>
<dbReference type="InParanoid" id="Q804X6"/>
<dbReference type="OrthoDB" id="8909918at2759"/>
<dbReference type="PhylomeDB" id="Q804X6"/>
<dbReference type="PRO" id="PR:Q804X6"/>
<dbReference type="Proteomes" id="UP000000539">
    <property type="component" value="Unassembled WGS sequence"/>
</dbReference>
<dbReference type="GO" id="GO:0005615">
    <property type="term" value="C:extracellular space"/>
    <property type="evidence" value="ECO:0000250"/>
    <property type="project" value="UniProtKB"/>
</dbReference>
<dbReference type="GO" id="GO:0005509">
    <property type="term" value="F:calcium ion binding"/>
    <property type="evidence" value="ECO:0000250"/>
    <property type="project" value="UniProtKB"/>
</dbReference>
<dbReference type="GO" id="GO:0004175">
    <property type="term" value="F:endopeptidase activity"/>
    <property type="evidence" value="ECO:0000250"/>
    <property type="project" value="UniProtKB"/>
</dbReference>
<dbReference type="GO" id="GO:0004252">
    <property type="term" value="F:serine-type endopeptidase activity"/>
    <property type="evidence" value="ECO:0000318"/>
    <property type="project" value="GO_Central"/>
</dbReference>
<dbReference type="GO" id="GO:0007596">
    <property type="term" value="P:blood coagulation"/>
    <property type="evidence" value="ECO:0000250"/>
    <property type="project" value="UniProtKB"/>
</dbReference>
<dbReference type="GO" id="GO:0006508">
    <property type="term" value="P:proteolysis"/>
    <property type="evidence" value="ECO:0000250"/>
    <property type="project" value="UniProtKB"/>
</dbReference>
<dbReference type="GO" id="GO:0031638">
    <property type="term" value="P:zymogen activation"/>
    <property type="evidence" value="ECO:0000250"/>
    <property type="project" value="UniProtKB"/>
</dbReference>
<dbReference type="CDD" id="cd00054">
    <property type="entry name" value="EGF_CA"/>
    <property type="match status" value="1"/>
</dbReference>
<dbReference type="CDD" id="cd00190">
    <property type="entry name" value="Tryp_SPc"/>
    <property type="match status" value="1"/>
</dbReference>
<dbReference type="FunFam" id="2.10.25.10:FF:000259">
    <property type="entry name" value="Coagulation factor VII"/>
    <property type="match status" value="1"/>
</dbReference>
<dbReference type="FunFam" id="2.10.25.10:FF:000162">
    <property type="entry name" value="Coagulation factor X (Predicted)"/>
    <property type="match status" value="1"/>
</dbReference>
<dbReference type="FunFam" id="2.40.10.10:FF:000003">
    <property type="entry name" value="Transmembrane serine protease 3"/>
    <property type="match status" value="1"/>
</dbReference>
<dbReference type="FunFam" id="4.10.740.10:FF:000001">
    <property type="entry name" value="vitamin K-dependent protein S"/>
    <property type="match status" value="1"/>
</dbReference>
<dbReference type="Gene3D" id="4.10.740.10">
    <property type="entry name" value="Coagulation Factor IX"/>
    <property type="match status" value="1"/>
</dbReference>
<dbReference type="Gene3D" id="2.10.25.10">
    <property type="entry name" value="Laminin"/>
    <property type="match status" value="2"/>
</dbReference>
<dbReference type="Gene3D" id="2.40.10.10">
    <property type="entry name" value="Trypsin-like serine proteases"/>
    <property type="match status" value="2"/>
</dbReference>
<dbReference type="InterPro" id="IPR017857">
    <property type="entry name" value="Coagulation_fac-like_Gla_dom"/>
</dbReference>
<dbReference type="InterPro" id="IPR001881">
    <property type="entry name" value="EGF-like_Ca-bd_dom"/>
</dbReference>
<dbReference type="InterPro" id="IPR000742">
    <property type="entry name" value="EGF-like_dom"/>
</dbReference>
<dbReference type="InterPro" id="IPR000152">
    <property type="entry name" value="EGF-type_Asp/Asn_hydroxyl_site"/>
</dbReference>
<dbReference type="InterPro" id="IPR018097">
    <property type="entry name" value="EGF_Ca-bd_CS"/>
</dbReference>
<dbReference type="InterPro" id="IPR035972">
    <property type="entry name" value="GLA-like_dom_SF"/>
</dbReference>
<dbReference type="InterPro" id="IPR000294">
    <property type="entry name" value="GLA_domain"/>
</dbReference>
<dbReference type="InterPro" id="IPR012224">
    <property type="entry name" value="Pept_S1A_FX"/>
</dbReference>
<dbReference type="InterPro" id="IPR050442">
    <property type="entry name" value="Peptidase_S1_coag_factors"/>
</dbReference>
<dbReference type="InterPro" id="IPR009003">
    <property type="entry name" value="Peptidase_S1_PA"/>
</dbReference>
<dbReference type="InterPro" id="IPR043504">
    <property type="entry name" value="Peptidase_S1_PA_chymotrypsin"/>
</dbReference>
<dbReference type="InterPro" id="IPR001314">
    <property type="entry name" value="Peptidase_S1A"/>
</dbReference>
<dbReference type="InterPro" id="IPR001254">
    <property type="entry name" value="Trypsin_dom"/>
</dbReference>
<dbReference type="InterPro" id="IPR018114">
    <property type="entry name" value="TRYPSIN_HIS"/>
</dbReference>
<dbReference type="InterPro" id="IPR033116">
    <property type="entry name" value="TRYPSIN_SER"/>
</dbReference>
<dbReference type="PANTHER" id="PTHR24278">
    <property type="entry name" value="COAGULATION FACTOR"/>
    <property type="match status" value="1"/>
</dbReference>
<dbReference type="PANTHER" id="PTHR24278:SF31">
    <property type="entry name" value="COAGULATION FACTOR IX"/>
    <property type="match status" value="1"/>
</dbReference>
<dbReference type="Pfam" id="PF00008">
    <property type="entry name" value="EGF"/>
    <property type="match status" value="1"/>
</dbReference>
<dbReference type="Pfam" id="PF14670">
    <property type="entry name" value="FXa_inhibition"/>
    <property type="match status" value="1"/>
</dbReference>
<dbReference type="Pfam" id="PF00594">
    <property type="entry name" value="Gla"/>
    <property type="match status" value="1"/>
</dbReference>
<dbReference type="Pfam" id="PF00089">
    <property type="entry name" value="Trypsin"/>
    <property type="match status" value="1"/>
</dbReference>
<dbReference type="PIRSF" id="PIRSF001143">
    <property type="entry name" value="Factor_X"/>
    <property type="match status" value="1"/>
</dbReference>
<dbReference type="PRINTS" id="PR00722">
    <property type="entry name" value="CHYMOTRYPSIN"/>
</dbReference>
<dbReference type="PRINTS" id="PR00010">
    <property type="entry name" value="EGFBLOOD"/>
</dbReference>
<dbReference type="PRINTS" id="PR00001">
    <property type="entry name" value="GLABLOOD"/>
</dbReference>
<dbReference type="SMART" id="SM00181">
    <property type="entry name" value="EGF"/>
    <property type="match status" value="2"/>
</dbReference>
<dbReference type="SMART" id="SM00179">
    <property type="entry name" value="EGF_CA"/>
    <property type="match status" value="1"/>
</dbReference>
<dbReference type="SMART" id="SM00069">
    <property type="entry name" value="GLA"/>
    <property type="match status" value="1"/>
</dbReference>
<dbReference type="SMART" id="SM00020">
    <property type="entry name" value="Tryp_SPc"/>
    <property type="match status" value="1"/>
</dbReference>
<dbReference type="SUPFAM" id="SSF57196">
    <property type="entry name" value="EGF/Laminin"/>
    <property type="match status" value="1"/>
</dbReference>
<dbReference type="SUPFAM" id="SSF57630">
    <property type="entry name" value="GLA-domain"/>
    <property type="match status" value="1"/>
</dbReference>
<dbReference type="SUPFAM" id="SSF50494">
    <property type="entry name" value="Trypsin-like serine proteases"/>
    <property type="match status" value="1"/>
</dbReference>
<dbReference type="PROSITE" id="PS00010">
    <property type="entry name" value="ASX_HYDROXYL"/>
    <property type="match status" value="1"/>
</dbReference>
<dbReference type="PROSITE" id="PS00022">
    <property type="entry name" value="EGF_1"/>
    <property type="match status" value="1"/>
</dbReference>
<dbReference type="PROSITE" id="PS01186">
    <property type="entry name" value="EGF_2"/>
    <property type="match status" value="2"/>
</dbReference>
<dbReference type="PROSITE" id="PS50026">
    <property type="entry name" value="EGF_3"/>
    <property type="match status" value="1"/>
</dbReference>
<dbReference type="PROSITE" id="PS01187">
    <property type="entry name" value="EGF_CA"/>
    <property type="match status" value="1"/>
</dbReference>
<dbReference type="PROSITE" id="PS00011">
    <property type="entry name" value="GLA_1"/>
    <property type="match status" value="1"/>
</dbReference>
<dbReference type="PROSITE" id="PS50998">
    <property type="entry name" value="GLA_2"/>
    <property type="match status" value="1"/>
</dbReference>
<dbReference type="PROSITE" id="PS50240">
    <property type="entry name" value="TRYPSIN_DOM"/>
    <property type="match status" value="1"/>
</dbReference>
<dbReference type="PROSITE" id="PS00134">
    <property type="entry name" value="TRYPSIN_HIS"/>
    <property type="match status" value="1"/>
</dbReference>
<dbReference type="PROSITE" id="PS00135">
    <property type="entry name" value="TRYPSIN_SER"/>
    <property type="match status" value="1"/>
</dbReference>
<accession>Q804X6</accession>
<evidence type="ECO:0000250" key="1"/>
<evidence type="ECO:0000250" key="2">
    <source>
        <dbReference type="UniProtKB" id="P00740"/>
    </source>
</evidence>
<evidence type="ECO:0000250" key="3">
    <source>
        <dbReference type="UniProtKB" id="P00741"/>
    </source>
</evidence>
<evidence type="ECO:0000255" key="4"/>
<evidence type="ECO:0000255" key="5">
    <source>
        <dbReference type="PROSITE-ProRule" id="PRU00076"/>
    </source>
</evidence>
<evidence type="ECO:0000255" key="6">
    <source>
        <dbReference type="PROSITE-ProRule" id="PRU00274"/>
    </source>
</evidence>
<evidence type="ECO:0000255" key="7">
    <source>
        <dbReference type="PROSITE-ProRule" id="PRU00463"/>
    </source>
</evidence>
<gene>
    <name type="primary">F9</name>
</gene>
<proteinExistence type="evidence at transcript level"/>
<name>FA9_CHICK</name>